<sequence>MGKNLLQQRAGKGSPTFRSPSWLRIGKVRYPNIFGHLVGKVIDIVHNPGMNAPVAIIKLENGTKFLTQAIQGLVINQKIEFGKGSPIANGNVIEIGDAPEGTIVCNVEENFGDGGKYARSAGSYAVVVGKSGDKVLIKLPSDKIKAVSNKARATVGVVAGGGVVEKPLLKAGANYWKYKVKAKKWPIVRGVAMNVVDHPHGGGLHQSVSRPSTVSRNAPPGRKVGHIAARRTGRKEGK</sequence>
<organism>
    <name type="scientific">Saccharolobus islandicus (strain M.14.25 / Kamchatka #1)</name>
    <name type="common">Sulfolobus islandicus</name>
    <dbReference type="NCBI Taxonomy" id="427317"/>
    <lineage>
        <taxon>Archaea</taxon>
        <taxon>Thermoproteota</taxon>
        <taxon>Thermoprotei</taxon>
        <taxon>Sulfolobales</taxon>
        <taxon>Sulfolobaceae</taxon>
        <taxon>Saccharolobus</taxon>
    </lineage>
</organism>
<gene>
    <name evidence="1" type="primary">rpl2</name>
    <name type="ordered locus">M1425_1423</name>
</gene>
<comment type="function">
    <text evidence="1">One of the primary rRNA binding proteins. Required for association of the 30S and 50S subunits to form the 70S ribosome, for tRNA binding and peptide bond formation. It has been suggested to have peptidyltransferase activity; this is somewhat controversial. Makes several contacts with the 16S rRNA in the 70S ribosome.</text>
</comment>
<comment type="subunit">
    <text evidence="1">Part of the 50S ribosomal subunit. Forms a bridge to the 30S subunit in the 70S ribosome.</text>
</comment>
<comment type="similarity">
    <text evidence="1">Belongs to the universal ribosomal protein uL2 family.</text>
</comment>
<accession>C3MVI1</accession>
<proteinExistence type="inferred from homology"/>
<feature type="chain" id="PRO_1000214463" description="Large ribosomal subunit protein uL2">
    <location>
        <begin position="1"/>
        <end position="238"/>
    </location>
</feature>
<feature type="region of interest" description="Disordered" evidence="2">
    <location>
        <begin position="200"/>
        <end position="238"/>
    </location>
</feature>
<feature type="compositionally biased region" description="Polar residues" evidence="2">
    <location>
        <begin position="206"/>
        <end position="216"/>
    </location>
</feature>
<feature type="compositionally biased region" description="Basic residues" evidence="2">
    <location>
        <begin position="223"/>
        <end position="238"/>
    </location>
</feature>
<protein>
    <recommendedName>
        <fullName evidence="1">Large ribosomal subunit protein uL2</fullName>
    </recommendedName>
    <alternativeName>
        <fullName evidence="3">50S ribosomal protein L2</fullName>
    </alternativeName>
</protein>
<keyword id="KW-0687">Ribonucleoprotein</keyword>
<keyword id="KW-0689">Ribosomal protein</keyword>
<keyword id="KW-0694">RNA-binding</keyword>
<keyword id="KW-0699">rRNA-binding</keyword>
<reference key="1">
    <citation type="journal article" date="2009" name="Proc. Natl. Acad. Sci. U.S.A.">
        <title>Biogeography of the Sulfolobus islandicus pan-genome.</title>
        <authorList>
            <person name="Reno M.L."/>
            <person name="Held N.L."/>
            <person name="Fields C.J."/>
            <person name="Burke P.V."/>
            <person name="Whitaker R.J."/>
        </authorList>
    </citation>
    <scope>NUCLEOTIDE SEQUENCE [LARGE SCALE GENOMIC DNA]</scope>
    <source>
        <strain>M.14.25 / Kamchatka #1</strain>
    </source>
</reference>
<evidence type="ECO:0000255" key="1">
    <source>
        <dbReference type="HAMAP-Rule" id="MF_01320"/>
    </source>
</evidence>
<evidence type="ECO:0000256" key="2">
    <source>
        <dbReference type="SAM" id="MobiDB-lite"/>
    </source>
</evidence>
<evidence type="ECO:0000305" key="3"/>
<dbReference type="EMBL" id="CP001400">
    <property type="protein sequence ID" value="ACP38176.1"/>
    <property type="molecule type" value="Genomic_DNA"/>
</dbReference>
<dbReference type="RefSeq" id="WP_012711421.1">
    <property type="nucleotide sequence ID" value="NC_012588.1"/>
</dbReference>
<dbReference type="SMR" id="C3MVI1"/>
<dbReference type="KEGG" id="sia:M1425_1423"/>
<dbReference type="HOGENOM" id="CLU_036235_0_1_2"/>
<dbReference type="Proteomes" id="UP000001350">
    <property type="component" value="Chromosome"/>
</dbReference>
<dbReference type="GO" id="GO:0022625">
    <property type="term" value="C:cytosolic large ribosomal subunit"/>
    <property type="evidence" value="ECO:0007669"/>
    <property type="project" value="TreeGrafter"/>
</dbReference>
<dbReference type="GO" id="GO:0019843">
    <property type="term" value="F:rRNA binding"/>
    <property type="evidence" value="ECO:0007669"/>
    <property type="project" value="UniProtKB-UniRule"/>
</dbReference>
<dbReference type="GO" id="GO:0003735">
    <property type="term" value="F:structural constituent of ribosome"/>
    <property type="evidence" value="ECO:0007669"/>
    <property type="project" value="InterPro"/>
</dbReference>
<dbReference type="GO" id="GO:0002181">
    <property type="term" value="P:cytoplasmic translation"/>
    <property type="evidence" value="ECO:0007669"/>
    <property type="project" value="TreeGrafter"/>
</dbReference>
<dbReference type="FunFam" id="2.30.30.30:FF:000001">
    <property type="entry name" value="50S ribosomal protein L2"/>
    <property type="match status" value="1"/>
</dbReference>
<dbReference type="FunFam" id="4.10.950.10:FF:000002">
    <property type="entry name" value="60S ribosomal protein L2"/>
    <property type="match status" value="1"/>
</dbReference>
<dbReference type="Gene3D" id="2.30.30.30">
    <property type="match status" value="1"/>
</dbReference>
<dbReference type="Gene3D" id="2.40.50.140">
    <property type="entry name" value="Nucleic acid-binding proteins"/>
    <property type="match status" value="1"/>
</dbReference>
<dbReference type="Gene3D" id="4.10.950.10">
    <property type="entry name" value="Ribosomal protein L2, domain 3"/>
    <property type="match status" value="1"/>
</dbReference>
<dbReference type="HAMAP" id="MF_01320_A">
    <property type="entry name" value="Ribosomal_uL2_A"/>
    <property type="match status" value="1"/>
</dbReference>
<dbReference type="InterPro" id="IPR012340">
    <property type="entry name" value="NA-bd_OB-fold"/>
</dbReference>
<dbReference type="InterPro" id="IPR014722">
    <property type="entry name" value="Rib_uL2_dom2"/>
</dbReference>
<dbReference type="InterPro" id="IPR002171">
    <property type="entry name" value="Ribosomal_uL2"/>
</dbReference>
<dbReference type="InterPro" id="IPR023672">
    <property type="entry name" value="Ribosomal_uL2_arc_euk"/>
</dbReference>
<dbReference type="InterPro" id="IPR022669">
    <property type="entry name" value="Ribosomal_uL2_C"/>
</dbReference>
<dbReference type="InterPro" id="IPR014726">
    <property type="entry name" value="Ribosomal_uL2_dom3"/>
</dbReference>
<dbReference type="InterPro" id="IPR022666">
    <property type="entry name" value="Ribosomal_uL2_RNA-bd_dom"/>
</dbReference>
<dbReference type="InterPro" id="IPR008991">
    <property type="entry name" value="Translation_prot_SH3-like_sf"/>
</dbReference>
<dbReference type="NCBIfam" id="NF007180">
    <property type="entry name" value="PRK09612.1"/>
    <property type="match status" value="1"/>
</dbReference>
<dbReference type="PANTHER" id="PTHR13691:SF16">
    <property type="entry name" value="LARGE RIBOSOMAL SUBUNIT PROTEIN UL2"/>
    <property type="match status" value="1"/>
</dbReference>
<dbReference type="PANTHER" id="PTHR13691">
    <property type="entry name" value="RIBOSOMAL PROTEIN L2"/>
    <property type="match status" value="1"/>
</dbReference>
<dbReference type="Pfam" id="PF00181">
    <property type="entry name" value="Ribosomal_L2"/>
    <property type="match status" value="1"/>
</dbReference>
<dbReference type="Pfam" id="PF03947">
    <property type="entry name" value="Ribosomal_L2_C"/>
    <property type="match status" value="1"/>
</dbReference>
<dbReference type="PIRSF" id="PIRSF002158">
    <property type="entry name" value="Ribosomal_L2"/>
    <property type="match status" value="1"/>
</dbReference>
<dbReference type="SMART" id="SM01383">
    <property type="entry name" value="Ribosomal_L2"/>
    <property type="match status" value="1"/>
</dbReference>
<dbReference type="SMART" id="SM01382">
    <property type="entry name" value="Ribosomal_L2_C"/>
    <property type="match status" value="1"/>
</dbReference>
<dbReference type="SUPFAM" id="SSF50249">
    <property type="entry name" value="Nucleic acid-binding proteins"/>
    <property type="match status" value="1"/>
</dbReference>
<dbReference type="SUPFAM" id="SSF50104">
    <property type="entry name" value="Translation proteins SH3-like domain"/>
    <property type="match status" value="1"/>
</dbReference>
<name>RL2_SACI4</name>